<dbReference type="EMBL" id="X55031">
    <property type="protein sequence ID" value="CAA38850.1"/>
    <property type="molecule type" value="mRNA"/>
</dbReference>
<dbReference type="EMBL" id="X63424">
    <property type="protein sequence ID" value="CAA45018.1"/>
    <property type="molecule type" value="mRNA"/>
</dbReference>
<dbReference type="PIR" id="JH0687">
    <property type="entry name" value="JH0687"/>
</dbReference>
<dbReference type="SMR" id="P25703"/>
<dbReference type="GlyCosmos" id="P25703">
    <property type="glycosylation" value="3 sites, No reported glycans"/>
</dbReference>
<dbReference type="AGR" id="Xenbase:XB-GENE-481833"/>
<dbReference type="Xenbase" id="XB-GENE-481833">
    <property type="gene designation" value="bmp2.S"/>
</dbReference>
<dbReference type="Proteomes" id="UP000186698">
    <property type="component" value="Unplaced"/>
</dbReference>
<dbReference type="GO" id="GO:0005615">
    <property type="term" value="C:extracellular space"/>
    <property type="evidence" value="ECO:0000318"/>
    <property type="project" value="GO_Central"/>
</dbReference>
<dbReference type="GO" id="GO:0005125">
    <property type="term" value="F:cytokine activity"/>
    <property type="evidence" value="ECO:0000318"/>
    <property type="project" value="GO_Central"/>
</dbReference>
<dbReference type="GO" id="GO:0008083">
    <property type="term" value="F:growth factor activity"/>
    <property type="evidence" value="ECO:0007669"/>
    <property type="project" value="UniProtKB-KW"/>
</dbReference>
<dbReference type="GO" id="GO:0051216">
    <property type="term" value="P:cartilage development"/>
    <property type="evidence" value="ECO:0007669"/>
    <property type="project" value="UniProtKB-KW"/>
</dbReference>
<dbReference type="GO" id="GO:0030154">
    <property type="term" value="P:cell differentiation"/>
    <property type="evidence" value="ECO:0007669"/>
    <property type="project" value="UniProtKB-KW"/>
</dbReference>
<dbReference type="GO" id="GO:0001503">
    <property type="term" value="P:ossification"/>
    <property type="evidence" value="ECO:0007669"/>
    <property type="project" value="UniProtKB-KW"/>
</dbReference>
<dbReference type="CDD" id="cd19390">
    <property type="entry name" value="TGF_beta_BMP2"/>
    <property type="match status" value="1"/>
</dbReference>
<dbReference type="FunFam" id="2.10.90.10:FF:000103">
    <property type="entry name" value="Bone morphogenetic protein 16"/>
    <property type="match status" value="1"/>
</dbReference>
<dbReference type="FunFam" id="2.60.120.970:FF:000009">
    <property type="entry name" value="bone morphogenetic protein 2"/>
    <property type="match status" value="1"/>
</dbReference>
<dbReference type="Gene3D" id="2.60.120.970">
    <property type="match status" value="1"/>
</dbReference>
<dbReference type="Gene3D" id="2.10.90.10">
    <property type="entry name" value="Cystine-knot cytokines"/>
    <property type="match status" value="1"/>
</dbReference>
<dbReference type="InterPro" id="IPR047953">
    <property type="entry name" value="BMP2_TGF_beta-like"/>
</dbReference>
<dbReference type="InterPro" id="IPR029034">
    <property type="entry name" value="Cystine-knot_cytokine"/>
</dbReference>
<dbReference type="InterPro" id="IPR001839">
    <property type="entry name" value="TGF-b_C"/>
</dbReference>
<dbReference type="InterPro" id="IPR001111">
    <property type="entry name" value="TGF-b_propeptide"/>
</dbReference>
<dbReference type="InterPro" id="IPR015615">
    <property type="entry name" value="TGF-beta-rel"/>
</dbReference>
<dbReference type="InterPro" id="IPR017948">
    <property type="entry name" value="TGFb_CS"/>
</dbReference>
<dbReference type="PANTHER" id="PTHR11848:SF143">
    <property type="entry name" value="BONE MORPHOGENETIC PROTEIN 2"/>
    <property type="match status" value="1"/>
</dbReference>
<dbReference type="PANTHER" id="PTHR11848">
    <property type="entry name" value="TGF-BETA FAMILY"/>
    <property type="match status" value="1"/>
</dbReference>
<dbReference type="Pfam" id="PF00019">
    <property type="entry name" value="TGF_beta"/>
    <property type="match status" value="1"/>
</dbReference>
<dbReference type="Pfam" id="PF00688">
    <property type="entry name" value="TGFb_propeptide"/>
    <property type="match status" value="1"/>
</dbReference>
<dbReference type="PRINTS" id="PR00669">
    <property type="entry name" value="INHIBINA"/>
</dbReference>
<dbReference type="SMART" id="SM00204">
    <property type="entry name" value="TGFB"/>
    <property type="match status" value="1"/>
</dbReference>
<dbReference type="SUPFAM" id="SSF57501">
    <property type="entry name" value="Cystine-knot cytokines"/>
    <property type="match status" value="1"/>
</dbReference>
<dbReference type="PROSITE" id="PS00250">
    <property type="entry name" value="TGF_BETA_1"/>
    <property type="match status" value="1"/>
</dbReference>
<dbReference type="PROSITE" id="PS51362">
    <property type="entry name" value="TGF_BETA_2"/>
    <property type="match status" value="1"/>
</dbReference>
<reference key="1">
    <citation type="journal article" date="1991" name="Biochim. Biophys. Acta">
        <title>cDNA sequence of Xenopus laevis bone morphogenetic protein 2 (BMP-2).</title>
        <authorList>
            <person name="Plessow S."/>
            <person name="Koester M."/>
            <person name="Knoechel W."/>
        </authorList>
    </citation>
    <scope>NUCLEOTIDE SEQUENCE [MRNA]</scope>
</reference>
<reference key="2">
    <citation type="journal article" date="1992" name="Biochem. Biophys. Res. Commun.">
        <title>Genes for bone morphogenetic proteins are differentially transcribed in early amphibian embryos.</title>
        <authorList>
            <person name="Nishimatsu S."/>
            <person name="Suzuki A."/>
            <person name="Shoda A."/>
            <person name="Murakami K."/>
            <person name="Ueno N."/>
        </authorList>
    </citation>
    <scope>NUCLEOTIDE SEQUENCE [MRNA]</scope>
</reference>
<keyword id="KW-0891">Chondrogenesis</keyword>
<keyword id="KW-0165">Cleavage on pair of basic residues</keyword>
<keyword id="KW-0202">Cytokine</keyword>
<keyword id="KW-0217">Developmental protein</keyword>
<keyword id="KW-0221">Differentiation</keyword>
<keyword id="KW-1015">Disulfide bond</keyword>
<keyword id="KW-0325">Glycoprotein</keyword>
<keyword id="KW-0339">Growth factor</keyword>
<keyword id="KW-0892">Osteogenesis</keyword>
<keyword id="KW-1185">Reference proteome</keyword>
<keyword id="KW-0964">Secreted</keyword>
<keyword id="KW-0732">Signal</keyword>
<evidence type="ECO:0000250" key="1"/>
<evidence type="ECO:0000250" key="2">
    <source>
        <dbReference type="UniProtKB" id="P12643"/>
    </source>
</evidence>
<evidence type="ECO:0000255" key="3"/>
<evidence type="ECO:0000305" key="4"/>
<proteinExistence type="evidence at transcript level"/>
<protein>
    <recommendedName>
        <fullName>Bone morphogenetic protein 2-A</fullName>
    </recommendedName>
    <alternativeName>
        <fullName>BMP-2-I</fullName>
    </alternativeName>
</protein>
<gene>
    <name type="primary">bmp2-a</name>
</gene>
<accession>P25703</accession>
<comment type="function">
    <text>Induces cartilage and bone formation.</text>
</comment>
<comment type="subunit">
    <text evidence="2">Homodimer; disulfide-linked.</text>
</comment>
<comment type="subcellular location">
    <subcellularLocation>
        <location evidence="1">Secreted</location>
    </subcellularLocation>
</comment>
<comment type="similarity">
    <text evidence="4">Belongs to the TGF-beta family.</text>
</comment>
<name>BMP2A_XENLA</name>
<feature type="signal peptide" evidence="3">
    <location>
        <begin position="1"/>
        <end position="23"/>
    </location>
</feature>
<feature type="propeptide" id="PRO_0000033832" evidence="3">
    <location>
        <begin position="24"/>
        <end position="284"/>
    </location>
</feature>
<feature type="chain" id="PRO_0000033833" description="Bone morphogenetic protein 2-A">
    <location>
        <begin position="285"/>
        <end position="398"/>
    </location>
</feature>
<feature type="glycosylation site" description="N-linked (GlcNAc...) asparagine" evidence="3">
    <location>
        <position position="137"/>
    </location>
</feature>
<feature type="glycosylation site" description="N-linked (GlcNAc...) asparagine" evidence="3">
    <location>
        <position position="202"/>
    </location>
</feature>
<feature type="glycosylation site" description="N-linked (GlcNAc...) asparagine" evidence="3">
    <location>
        <position position="340"/>
    </location>
</feature>
<feature type="disulfide bond" evidence="1">
    <location>
        <begin position="298"/>
        <end position="363"/>
    </location>
</feature>
<feature type="disulfide bond" evidence="1">
    <location>
        <begin position="327"/>
        <end position="395"/>
    </location>
</feature>
<feature type="disulfide bond" evidence="1">
    <location>
        <begin position="331"/>
        <end position="397"/>
    </location>
</feature>
<feature type="disulfide bond" description="Interchain" evidence="1">
    <location>
        <position position="362"/>
    </location>
</feature>
<feature type="sequence conflict" description="In Ref. 2; CAA45018." evidence="4" ref="2">
    <original>S</original>
    <variation>P</variation>
    <location>
        <position position="7"/>
    </location>
</feature>
<feature type="sequence conflict" description="In Ref. 2; CAA45018." evidence="4" ref="2">
    <original>V</original>
    <variation>L</variation>
    <location>
        <position position="16"/>
    </location>
</feature>
<feature type="sequence conflict" description="In Ref. 2; CAA45018." evidence="4" ref="2">
    <original>N</original>
    <variation>T</variation>
    <location>
        <position position="233"/>
    </location>
</feature>
<organism>
    <name type="scientific">Xenopus laevis</name>
    <name type="common">African clawed frog</name>
    <dbReference type="NCBI Taxonomy" id="8355"/>
    <lineage>
        <taxon>Eukaryota</taxon>
        <taxon>Metazoa</taxon>
        <taxon>Chordata</taxon>
        <taxon>Craniata</taxon>
        <taxon>Vertebrata</taxon>
        <taxon>Euteleostomi</taxon>
        <taxon>Amphibia</taxon>
        <taxon>Batrachia</taxon>
        <taxon>Anura</taxon>
        <taxon>Pipoidea</taxon>
        <taxon>Pipidae</taxon>
        <taxon>Xenopodinae</taxon>
        <taxon>Xenopus</taxon>
        <taxon>Xenopus</taxon>
    </lineage>
</organism>
<sequence>MVAGIHSLLLLLFYQVLLSGCTGLIPEEGKRKYTESGRSSPQQSQRVLNQFELRLLSMFGLKRRPTPGKNVVIPPYMLDLYHLHLAQLAADEGTSAMDFQMERAASRANTVRSFHHEESMEEIPESREKTIQRFFFNLSSIPNEELVTSAELRIFREQVQEPFESDSSKLHRINIYDIVKPAAAASRGPVVRLLDTRLVHHNESKWESFDVTPAIARWIAHKQPNHGFVVEVNHLDNDKNVPKKHVRISRSLTPDKDNWPQIRPLLVTFSHDGKGHALHKRQKRQARHKQRKRLKSSCRRHPLYVDFSDVGWNDWIVAPPGYHAFYCHGECPFPLADHLNSTNHAIVQTLVNSVNTNIPKACCVPTELSAISMLYLDENEKVVLKNYQDMVVEGCGCR</sequence>